<comment type="function">
    <text evidence="5 6 7 17">Involved in the TCA cycle. FumC seems to be a backup enzyme for FumA under conditions of iron limitation and oxidative stress (PubMed:7592392). Catalyzes the stereospecific interconversion of fumarate to L-malate (PubMed:1917897, PubMed:3282546).</text>
</comment>
<comment type="catalytic activity">
    <reaction evidence="1 5 6">
        <text>(S)-malate = fumarate + H2O</text>
        <dbReference type="Rhea" id="RHEA:12460"/>
        <dbReference type="ChEBI" id="CHEBI:15377"/>
        <dbReference type="ChEBI" id="CHEBI:15589"/>
        <dbReference type="ChEBI" id="CHEBI:29806"/>
        <dbReference type="EC" id="4.2.1.2"/>
    </reaction>
</comment>
<comment type="activity regulation">
    <text evidence="5">Inhibited by ATP, citrate and S-2,3-dicarboxyaziridine.</text>
</comment>
<comment type="biophysicochemical properties">
    <kinetics>
        <KM evidence="5">50 uM for L-malate (at pH 7.3 and 30 degrees Celsius)</KM>
        <KM evidence="2">207 uM for fumarate (at pH 7.9)</KM>
        <KM evidence="6">390 uM for fumarate</KM>
        <KM evidence="2">857 uM for S-malate (at pH 7.9)</KM>
        <KM evidence="6">2.94 mM for S-malate</KM>
        <Vmax evidence="6">1.0 umol/min/mg enzyme for fumarate</Vmax>
        <Vmax evidence="6">1.0 umol/min/mg enzyme for S-malate</Vmax>
        <Vmax evidence="2">344.8 umol/min/mg enzyme for fumarate (at pH 7.9)</Vmax>
        <Vmax evidence="2">176.8 umol/min/mg enzyme for S-malate (at pH 7.9)</Vmax>
        <text evidence="2">kcat is 1149 sec(-1) for fumarate (at pH 7.9). kcat is 595.2 sec(-1) for S-malate (at pH 7.9).</text>
    </kinetics>
    <phDependence>
        <text evidence="5">Optimum pH is 8.</text>
    </phDependence>
    <temperatureDependence>
        <text evidence="6">Thermostable.</text>
    </temperatureDependence>
</comment>
<comment type="pathway">
    <text evidence="1 14">Carbohydrate metabolism; tricarboxylic acid cycle; (S)-malate from fumarate: step 1/1.</text>
</comment>
<comment type="subunit">
    <text evidence="1 2 5 6 8 9 10">Homotetramer.</text>
</comment>
<comment type="subcellular location">
    <subcellularLocation>
        <location evidence="1 14">Cytoplasm</location>
    </subcellularLocation>
</comment>
<comment type="induction">
    <text evidence="6 7">Under conditions of iron limitation and oxidative stress.</text>
</comment>
<comment type="disruption phenotype">
    <text evidence="4">Cells lacking this gene show an increase of biofilm formation.</text>
</comment>
<comment type="miscellaneous">
    <text evidence="1 16 19">There are 2 substrate-binding sites: the catalytic A site, and the non-catalytic B site that may play a role in the transfer of substrate or product between the active site and the solvent. Alternatively, the B site may bind allosteric effectors.</text>
</comment>
<comment type="similarity">
    <text evidence="1 14">Belongs to the class-II fumarase/aspartase family. Fumarase subfamily.</text>
</comment>
<gene>
    <name evidence="1 12" type="primary">fumC</name>
    <name type="ordered locus">b1611</name>
    <name type="ordered locus">JW1603</name>
</gene>
<organism>
    <name type="scientific">Escherichia coli (strain K12)</name>
    <dbReference type="NCBI Taxonomy" id="83333"/>
    <lineage>
        <taxon>Bacteria</taxon>
        <taxon>Pseudomonadati</taxon>
        <taxon>Pseudomonadota</taxon>
        <taxon>Gammaproteobacteria</taxon>
        <taxon>Enterobacterales</taxon>
        <taxon>Enterobacteriaceae</taxon>
        <taxon>Escherichia</taxon>
    </lineage>
</organism>
<evidence type="ECO:0000255" key="1">
    <source>
        <dbReference type="HAMAP-Rule" id="MF_00743"/>
    </source>
</evidence>
<evidence type="ECO:0000269" key="2">
    <source>
    </source>
</evidence>
<evidence type="ECO:0000269" key="3">
    <source>
    </source>
</evidence>
<evidence type="ECO:0000269" key="4">
    <source>
    </source>
</evidence>
<evidence type="ECO:0000269" key="5">
    <source>
    </source>
</evidence>
<evidence type="ECO:0000269" key="6">
    <source>
    </source>
</evidence>
<evidence type="ECO:0000269" key="7">
    <source>
    </source>
</evidence>
<evidence type="ECO:0000269" key="8">
    <source>
    </source>
</evidence>
<evidence type="ECO:0000269" key="9">
    <source>
    </source>
</evidence>
<evidence type="ECO:0000269" key="10">
    <source>
    </source>
</evidence>
<evidence type="ECO:0000303" key="11">
    <source>
    </source>
</evidence>
<evidence type="ECO:0000303" key="12">
    <source>
    </source>
</evidence>
<evidence type="ECO:0000303" key="13">
    <source>
    </source>
</evidence>
<evidence type="ECO:0000305" key="14"/>
<evidence type="ECO:0000305" key="15">
    <source>
    </source>
</evidence>
<evidence type="ECO:0000305" key="16">
    <source>
    </source>
</evidence>
<evidence type="ECO:0000305" key="17">
    <source>
    </source>
</evidence>
<evidence type="ECO:0000305" key="18">
    <source>
    </source>
</evidence>
<evidence type="ECO:0000305" key="19">
    <source>
    </source>
</evidence>
<evidence type="ECO:0007744" key="20">
    <source>
        <dbReference type="PDB" id="1FUO"/>
    </source>
</evidence>
<evidence type="ECO:0007744" key="21">
    <source>
        <dbReference type="PDB" id="1FUP"/>
    </source>
</evidence>
<evidence type="ECO:0007744" key="22">
    <source>
        <dbReference type="PDB" id="1FUQ"/>
    </source>
</evidence>
<evidence type="ECO:0007744" key="23">
    <source>
        <dbReference type="PDB" id="1FUR"/>
    </source>
</evidence>
<evidence type="ECO:0007744" key="24">
    <source>
        <dbReference type="PDB" id="1KQ7"/>
    </source>
</evidence>
<evidence type="ECO:0007744" key="25">
    <source>
        <dbReference type="PDB" id="2FUS"/>
    </source>
</evidence>
<evidence type="ECO:0007829" key="26">
    <source>
        <dbReference type="PDB" id="1FUR"/>
    </source>
</evidence>
<evidence type="ECO:0007829" key="27">
    <source>
        <dbReference type="PDB" id="6NZB"/>
    </source>
</evidence>
<evidence type="ECO:0007829" key="28">
    <source>
        <dbReference type="PDB" id="6OS7"/>
    </source>
</evidence>
<proteinExistence type="evidence at protein level"/>
<protein>
    <recommendedName>
        <fullName evidence="1 11">Fumarate hydratase class II</fullName>
        <shortName evidence="1 12">Fumarase C</shortName>
        <ecNumber evidence="1 5 6">4.2.1.2</ecNumber>
    </recommendedName>
    <alternativeName>
        <fullName evidence="1 13">Aerobic fumarase</fullName>
    </alternativeName>
    <alternativeName>
        <fullName evidence="1 11">Iron-independent fumarase</fullName>
    </alternativeName>
</protein>
<dbReference type="EC" id="4.2.1.2" evidence="1 5 6"/>
<dbReference type="EMBL" id="X04065">
    <property type="protein sequence ID" value="CAA27698.1"/>
    <property type="molecule type" value="Genomic_DNA"/>
</dbReference>
<dbReference type="EMBL" id="U00096">
    <property type="protein sequence ID" value="AAC74683.1"/>
    <property type="molecule type" value="Genomic_DNA"/>
</dbReference>
<dbReference type="EMBL" id="AP009048">
    <property type="protein sequence ID" value="BAA15349.1"/>
    <property type="molecule type" value="Genomic_DNA"/>
</dbReference>
<dbReference type="EMBL" id="X00522">
    <property type="protein sequence ID" value="CAA25205.1"/>
    <property type="molecule type" value="Genomic_DNA"/>
</dbReference>
<dbReference type="PIR" id="S07138">
    <property type="entry name" value="UFEC"/>
</dbReference>
<dbReference type="RefSeq" id="NP_416128.1">
    <property type="nucleotide sequence ID" value="NC_000913.3"/>
</dbReference>
<dbReference type="RefSeq" id="WP_001099085.1">
    <property type="nucleotide sequence ID" value="NZ_SSZK01000001.1"/>
</dbReference>
<dbReference type="PDB" id="1FUO">
    <property type="method" value="X-ray"/>
    <property type="resolution" value="1.98 A"/>
    <property type="chains" value="A/B=1-467"/>
</dbReference>
<dbReference type="PDB" id="1FUP">
    <property type="method" value="X-ray"/>
    <property type="resolution" value="2.30 A"/>
    <property type="chains" value="A/B=1-467"/>
</dbReference>
<dbReference type="PDB" id="1FUQ">
    <property type="method" value="X-ray"/>
    <property type="resolution" value="2.00 A"/>
    <property type="chains" value="A/B=1-467"/>
</dbReference>
<dbReference type="PDB" id="1FUR">
    <property type="method" value="X-ray"/>
    <property type="resolution" value="1.95 A"/>
    <property type="chains" value="A/B=1-467"/>
</dbReference>
<dbReference type="PDB" id="1KQ7">
    <property type="method" value="X-ray"/>
    <property type="resolution" value="2.60 A"/>
    <property type="chains" value="A/B=1-467"/>
</dbReference>
<dbReference type="PDB" id="1YFE">
    <property type="method" value="X-ray"/>
    <property type="resolution" value="2.19 A"/>
    <property type="chains" value="A=1-467"/>
</dbReference>
<dbReference type="PDB" id="2FUS">
    <property type="method" value="X-ray"/>
    <property type="resolution" value="2.20 A"/>
    <property type="chains" value="A/B=1-467"/>
</dbReference>
<dbReference type="PDB" id="6NZ9">
    <property type="method" value="X-ray"/>
    <property type="resolution" value="1.53 A"/>
    <property type="chains" value="A/B=1-467"/>
</dbReference>
<dbReference type="PDB" id="6NZA">
    <property type="method" value="X-ray"/>
    <property type="resolution" value="1.41 A"/>
    <property type="chains" value="A/B=1-467"/>
</dbReference>
<dbReference type="PDB" id="6NZB">
    <property type="method" value="X-ray"/>
    <property type="resolution" value="1.37 A"/>
    <property type="chains" value="A/B=1-467"/>
</dbReference>
<dbReference type="PDB" id="6NZC">
    <property type="method" value="X-ray"/>
    <property type="resolution" value="1.40 A"/>
    <property type="chains" value="A/B=1-467"/>
</dbReference>
<dbReference type="PDB" id="6OS7">
    <property type="method" value="X-ray"/>
    <property type="resolution" value="1.36 A"/>
    <property type="chains" value="A/B=1-467"/>
</dbReference>
<dbReference type="PDB" id="6P3C">
    <property type="method" value="X-ray"/>
    <property type="resolution" value="1.46 A"/>
    <property type="chains" value="A/B=1-467"/>
</dbReference>
<dbReference type="PDB" id="8SBS">
    <property type="method" value="X-ray"/>
    <property type="resolution" value="1.91 A"/>
    <property type="chains" value="A=1-467"/>
</dbReference>
<dbReference type="PDBsum" id="1FUO"/>
<dbReference type="PDBsum" id="1FUP"/>
<dbReference type="PDBsum" id="1FUQ"/>
<dbReference type="PDBsum" id="1FUR"/>
<dbReference type="PDBsum" id="1KQ7"/>
<dbReference type="PDBsum" id="1YFE"/>
<dbReference type="PDBsum" id="2FUS"/>
<dbReference type="PDBsum" id="6NZ9"/>
<dbReference type="PDBsum" id="6NZA"/>
<dbReference type="PDBsum" id="6NZB"/>
<dbReference type="PDBsum" id="6NZC"/>
<dbReference type="PDBsum" id="6OS7"/>
<dbReference type="PDBsum" id="6P3C"/>
<dbReference type="PDBsum" id="8SBS"/>
<dbReference type="SMR" id="P05042"/>
<dbReference type="BioGRID" id="4263123">
    <property type="interactions" value="25"/>
</dbReference>
<dbReference type="DIP" id="DIP-9719N"/>
<dbReference type="FunCoup" id="P05042">
    <property type="interactions" value="704"/>
</dbReference>
<dbReference type="IntAct" id="P05042">
    <property type="interactions" value="14"/>
</dbReference>
<dbReference type="STRING" id="511145.b1611"/>
<dbReference type="DrugBank" id="DB03452">
    <property type="generic name" value="3-Trimethylsilylsuccinic Acid"/>
</dbReference>
<dbReference type="DrugBank" id="DB04272">
    <property type="generic name" value="Citric acid"/>
</dbReference>
<dbReference type="DrugBank" id="DB03499">
    <property type="generic name" value="D-Malic acid"/>
</dbReference>
<dbReference type="DrugBank" id="DB02749">
    <property type="generic name" value="Pyromellitic Acid"/>
</dbReference>
<dbReference type="jPOST" id="P05042"/>
<dbReference type="PaxDb" id="511145-b1611"/>
<dbReference type="EnsemblBacteria" id="AAC74683">
    <property type="protein sequence ID" value="AAC74683"/>
    <property type="gene ID" value="b1611"/>
</dbReference>
<dbReference type="GeneID" id="946147"/>
<dbReference type="KEGG" id="ecj:JW1603"/>
<dbReference type="KEGG" id="eco:b1611"/>
<dbReference type="KEGG" id="ecoc:C3026_09270"/>
<dbReference type="PATRIC" id="fig|1411691.4.peg.651"/>
<dbReference type="EchoBASE" id="EB0353"/>
<dbReference type="eggNOG" id="COG0114">
    <property type="taxonomic scope" value="Bacteria"/>
</dbReference>
<dbReference type="HOGENOM" id="CLU_021594_4_1_6"/>
<dbReference type="InParanoid" id="P05042"/>
<dbReference type="OMA" id="AKWRAQT"/>
<dbReference type="OrthoDB" id="9802809at2"/>
<dbReference type="PhylomeDB" id="P05042"/>
<dbReference type="BioCyc" id="EcoCyc:FUMC-MONOMER"/>
<dbReference type="BioCyc" id="MetaCyc:FUMC-MONOMER"/>
<dbReference type="BRENDA" id="4.2.1.2">
    <property type="organism ID" value="2026"/>
</dbReference>
<dbReference type="SABIO-RK" id="P05042"/>
<dbReference type="UniPathway" id="UPA00223">
    <property type="reaction ID" value="UER01007"/>
</dbReference>
<dbReference type="EvolutionaryTrace" id="P05042"/>
<dbReference type="PRO" id="PR:P05042"/>
<dbReference type="Proteomes" id="UP000000625">
    <property type="component" value="Chromosome"/>
</dbReference>
<dbReference type="GO" id="GO:0005737">
    <property type="term" value="C:cytoplasm"/>
    <property type="evidence" value="ECO:0007669"/>
    <property type="project" value="UniProtKB-SubCell"/>
</dbReference>
<dbReference type="GO" id="GO:0004333">
    <property type="term" value="F:fumarate hydratase activity"/>
    <property type="evidence" value="ECO:0000314"/>
    <property type="project" value="UniProtKB"/>
</dbReference>
<dbReference type="GO" id="GO:0042802">
    <property type="term" value="F:identical protein binding"/>
    <property type="evidence" value="ECO:0000314"/>
    <property type="project" value="EcoCyc"/>
</dbReference>
<dbReference type="GO" id="GO:0006106">
    <property type="term" value="P:fumarate metabolic process"/>
    <property type="evidence" value="ECO:0000318"/>
    <property type="project" value="GO_Central"/>
</dbReference>
<dbReference type="GO" id="GO:0006108">
    <property type="term" value="P:malate metabolic process"/>
    <property type="evidence" value="ECO:0000318"/>
    <property type="project" value="GO_Central"/>
</dbReference>
<dbReference type="GO" id="GO:0006979">
    <property type="term" value="P:response to oxidative stress"/>
    <property type="evidence" value="ECO:0000270"/>
    <property type="project" value="EcoCyc"/>
</dbReference>
<dbReference type="GO" id="GO:0006099">
    <property type="term" value="P:tricarboxylic acid cycle"/>
    <property type="evidence" value="ECO:0000318"/>
    <property type="project" value="GO_Central"/>
</dbReference>
<dbReference type="CDD" id="cd01362">
    <property type="entry name" value="Fumarase_classII"/>
    <property type="match status" value="1"/>
</dbReference>
<dbReference type="FunFam" id="1.10.40.30:FF:000002">
    <property type="entry name" value="Fumarate hydratase class II"/>
    <property type="match status" value="1"/>
</dbReference>
<dbReference type="FunFam" id="1.10.275.10:FF:000001">
    <property type="entry name" value="Fumarate hydratase, mitochondrial"/>
    <property type="match status" value="1"/>
</dbReference>
<dbReference type="FunFam" id="1.20.200.10:FF:000001">
    <property type="entry name" value="Fumarate hydratase, mitochondrial"/>
    <property type="match status" value="1"/>
</dbReference>
<dbReference type="Gene3D" id="1.10.40.30">
    <property type="entry name" value="Fumarase/aspartase (C-terminal domain)"/>
    <property type="match status" value="1"/>
</dbReference>
<dbReference type="Gene3D" id="1.20.200.10">
    <property type="entry name" value="Fumarase/aspartase (Central domain)"/>
    <property type="match status" value="1"/>
</dbReference>
<dbReference type="Gene3D" id="1.10.275.10">
    <property type="entry name" value="Fumarase/aspartase (N-terminal domain)"/>
    <property type="match status" value="1"/>
</dbReference>
<dbReference type="HAMAP" id="MF_00743">
    <property type="entry name" value="FumaraseC"/>
    <property type="match status" value="1"/>
</dbReference>
<dbReference type="InterPro" id="IPR005677">
    <property type="entry name" value="Fum_hydII"/>
</dbReference>
<dbReference type="InterPro" id="IPR024083">
    <property type="entry name" value="Fumarase/histidase_N"/>
</dbReference>
<dbReference type="InterPro" id="IPR018951">
    <property type="entry name" value="Fumarase_C_C"/>
</dbReference>
<dbReference type="InterPro" id="IPR020557">
    <property type="entry name" value="Fumarate_lyase_CS"/>
</dbReference>
<dbReference type="InterPro" id="IPR000362">
    <property type="entry name" value="Fumarate_lyase_fam"/>
</dbReference>
<dbReference type="InterPro" id="IPR022761">
    <property type="entry name" value="Fumarate_lyase_N"/>
</dbReference>
<dbReference type="InterPro" id="IPR008948">
    <property type="entry name" value="L-Aspartase-like"/>
</dbReference>
<dbReference type="NCBIfam" id="TIGR00979">
    <property type="entry name" value="fumC_II"/>
    <property type="match status" value="1"/>
</dbReference>
<dbReference type="NCBIfam" id="NF008909">
    <property type="entry name" value="PRK12273.1"/>
    <property type="match status" value="1"/>
</dbReference>
<dbReference type="PANTHER" id="PTHR11444">
    <property type="entry name" value="ASPARTATEAMMONIA/ARGININOSUCCINATE/ADENYLOSUCCINATE LYASE"/>
    <property type="match status" value="1"/>
</dbReference>
<dbReference type="PANTHER" id="PTHR11444:SF1">
    <property type="entry name" value="FUMARATE HYDRATASE, MITOCHONDRIAL"/>
    <property type="match status" value="1"/>
</dbReference>
<dbReference type="Pfam" id="PF10415">
    <property type="entry name" value="FumaraseC_C"/>
    <property type="match status" value="1"/>
</dbReference>
<dbReference type="Pfam" id="PF00206">
    <property type="entry name" value="Lyase_1"/>
    <property type="match status" value="1"/>
</dbReference>
<dbReference type="PRINTS" id="PR00149">
    <property type="entry name" value="FUMRATELYASE"/>
</dbReference>
<dbReference type="SUPFAM" id="SSF48557">
    <property type="entry name" value="L-aspartase-like"/>
    <property type="match status" value="1"/>
</dbReference>
<dbReference type="PROSITE" id="PS00163">
    <property type="entry name" value="FUMARATE_LYASES"/>
    <property type="match status" value="1"/>
</dbReference>
<keyword id="KW-0002">3D-structure</keyword>
<keyword id="KW-0021">Allosteric enzyme</keyword>
<keyword id="KW-0963">Cytoplasm</keyword>
<keyword id="KW-0903">Direct protein sequencing</keyword>
<keyword id="KW-0456">Lyase</keyword>
<keyword id="KW-1185">Reference proteome</keyword>
<keyword id="KW-0816">Tricarboxylic acid cycle</keyword>
<sequence>MNTVRSEKDSMGAIDVPADKLWGAQTQRSLEHFRISTEKMPTSLIHALALTKRAAAKVNEDLGLLSEEKASAIRQAADEVLAGQHDDEFPLAIWQTGSGTQSNMNMNEVLANRASELLGGVRGMERKVHPNDDVNKSQSSNDVFPTAMHVAALLALRKQLIPQLKTLTQTLNEKSRAFADIVKIGRTHLQDATPLTLGQEISGWVAMLEHNLKHIEYSLPHVAELALGGTAVGTGLNTHPEYARRVADELAVITCAPFVTAPNKFEALATCDALVQAHGALKGLAASLMKIANDVRWLASGPRCGIGEISIPENEPGSSIMPGKVNPTQCEALTMLCCQVMGNDVAINMGGASGNFELNVFRPMVIHNFLQSVRLLADGMESFNKHCAVGIEPNRERINQLLNESLMLVTALNTHIGYDKAAEIAKKAHKEGLTLKAAALALGYLSEAEFDSWVRPEQMVGSMKAGR</sequence>
<name>FUMC_ECOLI</name>
<accession>P05042</accession>
<accession>P76891</accession>
<feature type="chain" id="PRO_0000161275" description="Fumarate hydratase class II">
    <location>
        <begin position="1"/>
        <end position="467"/>
    </location>
</feature>
<feature type="active site" description="Proton donor/acceptor" evidence="1 10">
    <location>
        <position position="188"/>
    </location>
</feature>
<feature type="active site" evidence="1">
    <location>
        <position position="318"/>
    </location>
</feature>
<feature type="binding site" evidence="1 15 18 19 20 21 22 24 25">
    <location>
        <begin position="98"/>
        <end position="100"/>
    </location>
    <ligand>
        <name>substrate</name>
    </ligand>
</feature>
<feature type="binding site" evidence="9 10 20 21 22 23">
    <location>
        <position position="126"/>
    </location>
    <ligand>
        <name>substrate</name>
    </ligand>
</feature>
<feature type="binding site" description="in site B" evidence="2 9 10 20 21 22 23 24">
    <location>
        <begin position="129"/>
        <end position="132"/>
    </location>
    <ligand>
        <name>substrate</name>
    </ligand>
</feature>
<feature type="binding site" evidence="1 2 9 10 20 21 22 24 25">
    <location>
        <begin position="139"/>
        <end position="141"/>
    </location>
    <ligand>
        <name>substrate</name>
    </ligand>
</feature>
<feature type="binding site" evidence="1">
    <location>
        <position position="187"/>
    </location>
    <ligand>
        <name>substrate</name>
    </ligand>
</feature>
<feature type="binding site" evidence="1">
    <location>
        <position position="319"/>
    </location>
    <ligand>
        <name>substrate</name>
    </ligand>
</feature>
<feature type="binding site" evidence="1">
    <location>
        <begin position="324"/>
        <end position="326"/>
    </location>
    <ligand>
        <name>substrate</name>
    </ligand>
</feature>
<feature type="site" description="Important for catalytic activity" evidence="1 18">
    <location>
        <position position="331"/>
    </location>
</feature>
<feature type="mutagenesis site" description="10-fold decrease of fumarase activity." evidence="3">
    <original>R</original>
    <variation>A</variation>
    <location>
        <position position="126"/>
    </location>
</feature>
<feature type="mutagenesis site" description="No effect." evidence="3">
    <original>K</original>
    <variation>D</variation>
    <location>
        <position position="127"/>
    </location>
</feature>
<feature type="mutagenesis site" description="No effect on fumarase activity and essentially same conformation compared to the wild-type, but appears to dramatically reduce binding of ligands at the B-site." evidence="3 10">
    <original>H</original>
    <variation>N</variation>
    <location>
        <position position="129"/>
    </location>
</feature>
<feature type="mutagenesis site" description="200-fold decrease of fumarase activity." evidence="10">
    <original>H</original>
    <variation>N</variation>
    <location>
        <position position="188"/>
    </location>
</feature>
<feature type="mutagenesis site" description="There is essentially no effect on the affinity values for both S-malate and fumarate. In contrast, the catalytic efficiency values have been lowered by 10-fold in both directions." evidence="2">
    <original>E</original>
    <variation>Q</variation>
    <location>
        <position position="315"/>
    </location>
</feature>
<feature type="strand" evidence="28">
    <location>
        <begin position="4"/>
        <end position="9"/>
    </location>
</feature>
<feature type="strand" evidence="28">
    <location>
        <begin position="12"/>
        <end position="17"/>
    </location>
</feature>
<feature type="helix" evidence="28">
    <location>
        <begin position="24"/>
        <end position="32"/>
    </location>
</feature>
<feature type="helix" evidence="28">
    <location>
        <begin position="42"/>
        <end position="61"/>
    </location>
</feature>
<feature type="helix" evidence="28">
    <location>
        <begin position="67"/>
        <end position="81"/>
    </location>
</feature>
<feature type="turn" evidence="26">
    <location>
        <begin position="82"/>
        <end position="85"/>
    </location>
</feature>
<feature type="helix" evidence="28">
    <location>
        <begin position="86"/>
        <end position="88"/>
    </location>
</feature>
<feature type="strand" evidence="28">
    <location>
        <begin position="92"/>
        <end position="95"/>
    </location>
</feature>
<feature type="helix" evidence="28">
    <location>
        <begin position="100"/>
        <end position="117"/>
    </location>
</feature>
<feature type="helix" evidence="28">
    <location>
        <begin position="130"/>
        <end position="134"/>
    </location>
</feature>
<feature type="turn" evidence="28">
    <location>
        <begin position="135"/>
        <end position="137"/>
    </location>
</feature>
<feature type="helix" evidence="28">
    <location>
        <begin position="140"/>
        <end position="158"/>
    </location>
</feature>
<feature type="helix" evidence="28">
    <location>
        <begin position="160"/>
        <end position="177"/>
    </location>
</feature>
<feature type="turn" evidence="28">
    <location>
        <begin position="178"/>
        <end position="180"/>
    </location>
</feature>
<feature type="strand" evidence="28">
    <location>
        <begin position="182"/>
        <end position="187"/>
    </location>
</feature>
<feature type="strand" evidence="28">
    <location>
        <begin position="190"/>
        <end position="196"/>
    </location>
</feature>
<feature type="helix" evidence="28">
    <location>
        <begin position="197"/>
        <end position="222"/>
    </location>
</feature>
<feature type="turn" evidence="28">
    <location>
        <begin position="230"/>
        <end position="232"/>
    </location>
</feature>
<feature type="helix" evidence="28">
    <location>
        <begin position="242"/>
        <end position="254"/>
    </location>
</feature>
<feature type="helix" evidence="28">
    <location>
        <begin position="264"/>
        <end position="269"/>
    </location>
</feature>
<feature type="helix" evidence="28">
    <location>
        <begin position="272"/>
        <end position="298"/>
    </location>
</feature>
<feature type="strand" evidence="28">
    <location>
        <begin position="302"/>
        <end position="305"/>
    </location>
</feature>
<feature type="strand" evidence="28">
    <location>
        <begin position="308"/>
        <end position="310"/>
    </location>
</feature>
<feature type="strand" evidence="27">
    <location>
        <begin position="319"/>
        <end position="321"/>
    </location>
</feature>
<feature type="helix" evidence="28">
    <location>
        <begin position="328"/>
        <end position="351"/>
    </location>
</feature>
<feature type="helix" evidence="28">
    <location>
        <begin position="362"/>
        <end position="386"/>
    </location>
</feature>
<feature type="helix" evidence="28">
    <location>
        <begin position="388"/>
        <end position="390"/>
    </location>
</feature>
<feature type="helix" evidence="28">
    <location>
        <begin position="395"/>
        <end position="404"/>
    </location>
</feature>
<feature type="helix" evidence="28">
    <location>
        <begin position="407"/>
        <end position="412"/>
    </location>
</feature>
<feature type="helix" evidence="28">
    <location>
        <begin position="413"/>
        <end position="416"/>
    </location>
</feature>
<feature type="helix" evidence="28">
    <location>
        <begin position="418"/>
        <end position="431"/>
    </location>
</feature>
<feature type="helix" evidence="28">
    <location>
        <begin position="435"/>
        <end position="442"/>
    </location>
</feature>
<feature type="helix" evidence="28">
    <location>
        <begin position="447"/>
        <end position="453"/>
    </location>
</feature>
<feature type="helix" evidence="28">
    <location>
        <begin position="456"/>
        <end position="458"/>
    </location>
</feature>
<reference key="1">
    <citation type="journal article" date="1986" name="Biochem. J.">
        <title>Structural and functional relationships between fumarase and aspartase. Nucleotide sequences of the fumarase (fumC) and aspartase (aspA) genes of Escherichia coli K12.</title>
        <authorList>
            <person name="Woods S.A."/>
            <person name="Miles J.S."/>
            <person name="Roberts R.E."/>
            <person name="Guest J.R."/>
        </authorList>
    </citation>
    <scope>NUCLEOTIDE SEQUENCE [GENOMIC DNA]</scope>
    <source>
        <strain>K12</strain>
    </source>
</reference>
<reference key="2">
    <citation type="journal article" date="1996" name="DNA Res.">
        <title>A 570-kb DNA sequence of the Escherichia coli K-12 genome corresponding to the 28.0-40.1 min region on the linkage map.</title>
        <authorList>
            <person name="Aiba H."/>
            <person name="Baba T."/>
            <person name="Fujita K."/>
            <person name="Hayashi K."/>
            <person name="Inada T."/>
            <person name="Isono K."/>
            <person name="Itoh T."/>
            <person name="Kasai H."/>
            <person name="Kashimoto K."/>
            <person name="Kimura S."/>
            <person name="Kitakawa M."/>
            <person name="Kitagawa M."/>
            <person name="Makino K."/>
            <person name="Miki T."/>
            <person name="Mizobuchi K."/>
            <person name="Mori H."/>
            <person name="Mori T."/>
            <person name="Motomura K."/>
            <person name="Nakade S."/>
            <person name="Nakamura Y."/>
            <person name="Nashimoto H."/>
            <person name="Nishio Y."/>
            <person name="Oshima T."/>
            <person name="Saito N."/>
            <person name="Sampei G."/>
            <person name="Seki Y."/>
            <person name="Sivasundaram S."/>
            <person name="Tagami H."/>
            <person name="Takeda J."/>
            <person name="Takemoto K."/>
            <person name="Takeuchi Y."/>
            <person name="Wada C."/>
            <person name="Yamamoto Y."/>
            <person name="Horiuchi T."/>
        </authorList>
    </citation>
    <scope>NUCLEOTIDE SEQUENCE [LARGE SCALE GENOMIC DNA]</scope>
    <source>
        <strain>K12 / W3110 / ATCC 27325 / DSM 5911</strain>
    </source>
</reference>
<reference key="3">
    <citation type="journal article" date="1997" name="Science">
        <title>The complete genome sequence of Escherichia coli K-12.</title>
        <authorList>
            <person name="Blattner F.R."/>
            <person name="Plunkett G. III"/>
            <person name="Bloch C.A."/>
            <person name="Perna N.T."/>
            <person name="Burland V."/>
            <person name="Riley M."/>
            <person name="Collado-Vides J."/>
            <person name="Glasner J.D."/>
            <person name="Rode C.K."/>
            <person name="Mayhew G.F."/>
            <person name="Gregor J."/>
            <person name="Davis N.W."/>
            <person name="Kirkpatrick H.A."/>
            <person name="Goeden M.A."/>
            <person name="Rose D.J."/>
            <person name="Mau B."/>
            <person name="Shao Y."/>
        </authorList>
    </citation>
    <scope>NUCLEOTIDE SEQUENCE [LARGE SCALE GENOMIC DNA]</scope>
    <source>
        <strain>K12 / MG1655 / ATCC 47076</strain>
    </source>
</reference>
<reference key="4">
    <citation type="journal article" date="2006" name="Mol. Syst. Biol.">
        <title>Highly accurate genome sequences of Escherichia coli K-12 strains MG1655 and W3110.</title>
        <authorList>
            <person name="Hayashi K."/>
            <person name="Morooka N."/>
            <person name="Yamamoto Y."/>
            <person name="Fujita K."/>
            <person name="Isono K."/>
            <person name="Choi S."/>
            <person name="Ohtsubo E."/>
            <person name="Baba T."/>
            <person name="Wanner B.L."/>
            <person name="Mori H."/>
            <person name="Horiuchi T."/>
        </authorList>
    </citation>
    <scope>NUCLEOTIDE SEQUENCE [LARGE SCALE GENOMIC DNA]</scope>
    <source>
        <strain>K12 / W3110 / ATCC 27325 / DSM 5911</strain>
    </source>
</reference>
<reference key="5">
    <citation type="journal article" date="1984" name="Nucleic Acids Res.">
        <title>Complete nucleotide sequence of the fumarase gene fumA, of Escherichia coli.</title>
        <authorList>
            <person name="Miles J.S."/>
            <person name="Guest J.R."/>
        </authorList>
    </citation>
    <scope>NUCLEOTIDE SEQUENCE [GENOMIC DNA] OF 1-89</scope>
</reference>
<reference key="6">
    <citation type="journal article" date="1985" name="J. Gen. Microbiol.">
        <title>The fumarase genes of Escherichia coli: location of the fumB gene and discovery of a new gene (fumC).</title>
        <authorList>
            <person name="Guest J.R."/>
            <person name="Miles J.S."/>
            <person name="Roberts R.E."/>
            <person name="Woods S.A."/>
        </authorList>
    </citation>
    <scope>NUCLEOTIDE SEQUENCE [GENOMIC DNA] OF 1-89</scope>
</reference>
<reference key="7">
    <citation type="journal article" date="1991" name="J. Biochem.">
        <title>Purification and characterization of two types of fumarase from Escherichia coli.</title>
        <authorList>
            <person name="Ueda Y."/>
            <person name="Yumoto N."/>
            <person name="Tokushige M."/>
            <person name="Fukui K."/>
            <person name="Ohya-Nishiguchi H."/>
        </authorList>
    </citation>
    <scope>PROTEIN SEQUENCE OF 1-20</scope>
    <scope>FUNCTION</scope>
    <scope>CATALYTIC ACTIVITY</scope>
    <scope>BIOPHYSICOCHEMICAL PROPERTIES</scope>
    <scope>ACTIVITY REGULATION</scope>
    <scope>SUBUNIT</scope>
</reference>
<reference key="8">
    <citation type="journal article" date="1993" name="J. Mol. Biol.">
        <title>Purification and crystallization of fumarase C from Escherichia coli.</title>
        <authorList>
            <person name="Weaver T.M."/>
            <person name="Levitt D.G."/>
            <person name="Banaszak L.J."/>
        </authorList>
    </citation>
    <scope>PROTEIN SEQUENCE OF 1-15</scope>
    <scope>FUNCTION</scope>
    <scope>SUBUNIT</scope>
</reference>
<reference key="9">
    <citation type="journal article" date="1988" name="Biochim. Biophys. Acta">
        <title>Two biochemically distinct classes of fumarase in Escherichia coli.</title>
        <authorList>
            <person name="Woods S.A."/>
            <person name="Shwartzbach S.D."/>
            <person name="Guest J.R."/>
        </authorList>
    </citation>
    <scope>FUNCTION</scope>
    <scope>CATALYTIC ACTIVITY</scope>
    <scope>BIOPHYSICOCHEMICAL PROPERTIES</scope>
    <scope>INDUCTION</scope>
    <scope>SUBUNIT</scope>
</reference>
<reference key="10">
    <citation type="journal article" date="1995" name="J. Bacteriol.">
        <title>Oxygen, iron, carbon, and superoxide control of the fumarase fumA and fumC genes of Escherichia coli: role of the arcA, fnr, and soxR gene products.</title>
        <authorList>
            <person name="Park S.J."/>
            <person name="Gunsalus R.P."/>
        </authorList>
    </citation>
    <scope>FUNCTION</scope>
    <scope>INDUCTION</scope>
</reference>
<reference key="11">
    <citation type="journal article" date="1997" name="Electrophoresis">
        <title>Escherichia coli proteome analysis using the gene-protein database.</title>
        <authorList>
            <person name="VanBogelen R.A."/>
            <person name="Abshire K.Z."/>
            <person name="Moldover B."/>
            <person name="Olson E.R."/>
            <person name="Neidhardt F.C."/>
        </authorList>
    </citation>
    <scope>IDENTIFICATION BY 2D-GEL</scope>
</reference>
<reference key="12">
    <citation type="journal article" date="2004" name="Proc. Natl. Acad. Sci. U.S.A.">
        <title>The role of the allosteric B site in the fumarase reaction.</title>
        <authorList>
            <person name="Rose I.A."/>
            <person name="Weaver T.M."/>
        </authorList>
    </citation>
    <scope>MUTAGENESIS OF ARG-126; LYS-127 AND HIS-129</scope>
</reference>
<reference key="13">
    <citation type="journal article" date="2007" name="Environ. Microbiol.">
        <title>Temporal gene-expression in Escherichia coli K-12 biofilms.</title>
        <authorList>
            <person name="Domka J."/>
            <person name="Lee J."/>
            <person name="Bansal T."/>
            <person name="Wood T.K."/>
        </authorList>
    </citation>
    <scope>DISRUPTION PHENOTYPE</scope>
</reference>
<reference key="14">
    <citation type="journal article" date="2012" name="Biochemistry">
        <title>Aspartase/fumarase superfamily: a common catalytic strategy involving general base-catalyzed formation of a highly stabilized aci-carboxylate intermediate.</title>
        <authorList>
            <person name="Puthan Veetil V."/>
            <person name="Fibriansah G."/>
            <person name="Raj H."/>
            <person name="Thunnissen A.M."/>
            <person name="Poelarends G.J."/>
        </authorList>
    </citation>
    <scope>REACTION MECHANISM</scope>
</reference>
<reference key="15">
    <citation type="journal article" date="1996" name="Biochemistry">
        <title>Crystallographic studies of the catalytic and a second site in fumarase C from Escherichia coli.</title>
        <authorList>
            <person name="Weaver T."/>
            <person name="Banaszak L."/>
        </authorList>
    </citation>
    <scope>X-RAY CRYSTALLOGRAPHY (2.7 ANGSTROMS) IN COMPLEX WITH SUBSTRATE AND SUBSTRATE ANALOGS</scope>
    <scope>SUBUNIT</scope>
</reference>
<reference key="16">
    <citation type="journal article" date="1997" name="Protein Sci.">
        <title>Mutations of fumarase that distinguish between the active site and a nearby dicarboxylic acid binding site.</title>
        <authorList>
            <person name="Weaver T."/>
            <person name="Lees M."/>
            <person name="Banaszak L."/>
        </authorList>
    </citation>
    <scope>X-RAY CRYSTALLOGRAPHY (1.95 ANGSTROMS) OF MUTANTS ASN-129 AND ASN-188 IN COMPLEX WITH SUBSTRATE AND SUBSTRATE ANALOGS</scope>
    <scope>MUTAGENESIS OF HIS-129 AND HIS-188</scope>
    <scope>ACTIVE SITE</scope>
    <scope>SUBUNIT</scope>
</reference>
<reference key="17">
    <citation type="journal article" date="2002" name="Protein Sci.">
        <title>X-ray crystallographic and kinetic correlation of a clinically observed human fumarase mutation.</title>
        <authorList>
            <person name="Estevez M."/>
            <person name="Skarda J."/>
            <person name="Spencer J."/>
            <person name="Banaszak L."/>
            <person name="Weaver T.M."/>
        </authorList>
    </citation>
    <scope>X-RAY CRYSTALLOGRAPHY (2.6 ANGSTROMS) OF MUTANT GLN-315 IN COMPLEX WITH SUBSTRATE AND SUBSTRATE ANALOGS</scope>
    <scope>MUTAGENESIS OF GLU-315</scope>
    <scope>BIOPHYSICOCHEMICAL PROPERTIES</scope>
    <scope>SUBUNIT</scope>
</reference>
<reference key="18">
    <citation type="journal article" date="2005" name="Acta Crystallogr. D">
        <title>Structure of free fumarase C from Escherichia coli.</title>
        <authorList>
            <person name="Weaver T."/>
        </authorList>
    </citation>
    <scope>X-RAY CRYSTALLOGRAPHY (2.19 ANGSTROMS)</scope>
</reference>